<feature type="chain" id="PRO_0000327378" description="NADH-ubiquinone oxidoreductase 75 kDa subunit">
    <location>
        <begin position="1"/>
        <end position="688"/>
    </location>
</feature>
<feature type="domain" description="2Fe-2S ferredoxin-type" evidence="2">
    <location>
        <begin position="1"/>
        <end position="85"/>
    </location>
</feature>
<feature type="domain" description="4Fe-4S His(Cys)3-ligated-type" evidence="4">
    <location>
        <begin position="85"/>
        <end position="124"/>
    </location>
</feature>
<feature type="domain" description="4Fe-4S Mo/W bis-MGD-type" evidence="3">
    <location>
        <begin position="223"/>
        <end position="279"/>
    </location>
</feature>
<feature type="binding site" evidence="1">
    <location>
        <position position="38"/>
    </location>
    <ligand>
        <name>[2Fe-2S] cluster</name>
        <dbReference type="ChEBI" id="CHEBI:190135"/>
    </ligand>
</feature>
<feature type="binding site" evidence="1">
    <location>
        <position position="49"/>
    </location>
    <ligand>
        <name>[2Fe-2S] cluster</name>
        <dbReference type="ChEBI" id="CHEBI:190135"/>
    </ligand>
</feature>
<feature type="binding site" evidence="1">
    <location>
        <position position="52"/>
    </location>
    <ligand>
        <name>[2Fe-2S] cluster</name>
        <dbReference type="ChEBI" id="CHEBI:190135"/>
    </ligand>
</feature>
<feature type="binding site" evidence="1">
    <location>
        <position position="66"/>
    </location>
    <ligand>
        <name>[2Fe-2S] cluster</name>
        <dbReference type="ChEBI" id="CHEBI:190135"/>
    </ligand>
</feature>
<feature type="binding site" evidence="4">
    <location>
        <position position="101"/>
    </location>
    <ligand>
        <name>[4Fe-4S] cluster</name>
        <dbReference type="ChEBI" id="CHEBI:49883"/>
        <label>1</label>
    </ligand>
</feature>
<feature type="binding site" evidence="4">
    <location>
        <position position="105"/>
    </location>
    <ligand>
        <name>[4Fe-4S] cluster</name>
        <dbReference type="ChEBI" id="CHEBI:49883"/>
        <label>1</label>
    </ligand>
</feature>
<feature type="binding site" evidence="4">
    <location>
        <position position="108"/>
    </location>
    <ligand>
        <name>[4Fe-4S] cluster</name>
        <dbReference type="ChEBI" id="CHEBI:49883"/>
        <label>1</label>
    </ligand>
</feature>
<feature type="binding site" evidence="4">
    <location>
        <position position="114"/>
    </location>
    <ligand>
        <name>[4Fe-4S] cluster</name>
        <dbReference type="ChEBI" id="CHEBI:49883"/>
        <label>1</label>
    </ligand>
</feature>
<feature type="binding site" evidence="1">
    <location>
        <position position="153"/>
    </location>
    <ligand>
        <name>[4Fe-4S] cluster</name>
        <dbReference type="ChEBI" id="CHEBI:49883"/>
        <label>2</label>
    </ligand>
</feature>
<feature type="binding site" evidence="1">
    <location>
        <position position="156"/>
    </location>
    <ligand>
        <name>[4Fe-4S] cluster</name>
        <dbReference type="ChEBI" id="CHEBI:49883"/>
        <label>2</label>
    </ligand>
</feature>
<feature type="binding site" evidence="1">
    <location>
        <position position="159"/>
    </location>
    <ligand>
        <name>[4Fe-4S] cluster</name>
        <dbReference type="ChEBI" id="CHEBI:49883"/>
        <label>2</label>
    </ligand>
</feature>
<feature type="binding site" evidence="1">
    <location>
        <position position="204"/>
    </location>
    <ligand>
        <name>[4Fe-4S] cluster</name>
        <dbReference type="ChEBI" id="CHEBI:49883"/>
        <label>2</label>
    </ligand>
</feature>
<organism>
    <name type="scientific">Dictyostelium citrinum</name>
    <name type="common">Slime mold</name>
    <dbReference type="NCBI Taxonomy" id="361072"/>
    <lineage>
        <taxon>Eukaryota</taxon>
        <taxon>Amoebozoa</taxon>
        <taxon>Evosea</taxon>
        <taxon>Eumycetozoa</taxon>
        <taxon>Dictyostelia</taxon>
        <taxon>Dictyosteliales</taxon>
        <taxon>Dictyosteliaceae</taxon>
        <taxon>Dictyostelium</taxon>
    </lineage>
</organism>
<proteinExistence type="inferred from homology"/>
<sequence>MLIRFKINEIECEVDEEKEDLTILQACTANGIEIPRFCYHEKLTIAGNCRMCLVYVTNEEKLLAACGIPLDENFDDESIETEIDEILKAREGVMEFLLINHPLDCPICDQGGECDLQEQTIAYGLDTGRFYIKKRAVEVKAFGRLIKGIMTRCIHCTRCVRFLTEIAGVNELGVLGRGYNMEIGTYKKNVIIESELSGNIIDLCPVGALTSAVYAYKGRPWELKNIKGIDIFDTVLTPINYQVKGGEIFRILPRINDRLNEEWITDKVRFHYESYKIIEKMRKDTPSYKIQANKFIELSWKTALKMVFKVLLNKKNKVDLIIGSKINSTNLRIYKELMNRLGSKNYITENGLLFKKFNYDFRENYINSNDLYNVDQNDLVLLCGINLRVESPLLNIKLRNINFGDDEIETRKKIGIIGNKFDWKQESEYLGSTVNSMLKVFEGRFPYCQQIKKSKAPLILVGSSLLSRIAISLQEIRAAFEIASNIKPENVLLITQGANFGMALEEGIFKENFSKGGNVLYSIDSNEYKVSKTINYIIYQGILNDTFENKIDLYLPSKHYFEDFESDREIYVNTFGQRSEIEKLRISKGNKIKENSMIGYIQLMYLNKKEMNRKEKEQKEIKITYRGIKQKEKRQVKINKNLTINNIIDNYYMTDINSRLSKNLMITGQLRKEKKIMEAGSWKNKTCI</sequence>
<evidence type="ECO:0000250" key="1"/>
<evidence type="ECO:0000255" key="2">
    <source>
        <dbReference type="PROSITE-ProRule" id="PRU00465"/>
    </source>
</evidence>
<evidence type="ECO:0000255" key="3">
    <source>
        <dbReference type="PROSITE-ProRule" id="PRU01004"/>
    </source>
</evidence>
<evidence type="ECO:0000255" key="4">
    <source>
        <dbReference type="PROSITE-ProRule" id="PRU01184"/>
    </source>
</evidence>
<evidence type="ECO:0000305" key="5"/>
<keyword id="KW-0001">2Fe-2S</keyword>
<keyword id="KW-0004">4Fe-4S</keyword>
<keyword id="KW-0249">Electron transport</keyword>
<keyword id="KW-0408">Iron</keyword>
<keyword id="KW-0411">Iron-sulfur</keyword>
<keyword id="KW-0472">Membrane</keyword>
<keyword id="KW-0479">Metal-binding</keyword>
<keyword id="KW-0496">Mitochondrion</keyword>
<keyword id="KW-0999">Mitochondrion inner membrane</keyword>
<keyword id="KW-0520">NAD</keyword>
<keyword id="KW-0560">Oxidoreductase</keyword>
<keyword id="KW-0679">Respiratory chain</keyword>
<keyword id="KW-1278">Translocase</keyword>
<keyword id="KW-0813">Transport</keyword>
<keyword id="KW-0830">Ubiquinone</keyword>
<geneLocation type="mitochondrion"/>
<comment type="function">
    <text evidence="1">Core subunit of the mitochondrial membrane respiratory chain NADH dehydrogenase (Complex I) that is believed to belong to the minimal assembly required for catalysis. Complex I functions in the transfer of electrons from NADH to the respiratory chain. The immediate electron acceptor for the enzyme is believed to be ubiquinone (By similarity). This is the largest subunit of complex I and it is a component of the iron-sulfur (IP) fragment of the enzyme. It may form part of the active site crevice where NADH is oxidized (By similarity).</text>
</comment>
<comment type="catalytic activity">
    <reaction>
        <text>a ubiquinone + NADH + 5 H(+)(in) = a ubiquinol + NAD(+) + 4 H(+)(out)</text>
        <dbReference type="Rhea" id="RHEA:29091"/>
        <dbReference type="Rhea" id="RHEA-COMP:9565"/>
        <dbReference type="Rhea" id="RHEA-COMP:9566"/>
        <dbReference type="ChEBI" id="CHEBI:15378"/>
        <dbReference type="ChEBI" id="CHEBI:16389"/>
        <dbReference type="ChEBI" id="CHEBI:17976"/>
        <dbReference type="ChEBI" id="CHEBI:57540"/>
        <dbReference type="ChEBI" id="CHEBI:57945"/>
        <dbReference type="EC" id="7.1.1.2"/>
    </reaction>
</comment>
<comment type="cofactor">
    <cofactor evidence="1">
        <name>[2Fe-2S] cluster</name>
        <dbReference type="ChEBI" id="CHEBI:190135"/>
    </cofactor>
    <text evidence="1">Binds 1 [2Fe-2S] cluster per subunit.</text>
</comment>
<comment type="cofactor">
    <cofactor evidence="1">
        <name>[4Fe-4S] cluster</name>
        <dbReference type="ChEBI" id="CHEBI:49883"/>
    </cofactor>
    <text evidence="1">Binds 2 [4Fe-4S] clusters per subunit.</text>
</comment>
<comment type="subunit">
    <text evidence="1">Complex I is composed of about 45 different subunits.</text>
</comment>
<comment type="subcellular location">
    <subcellularLocation>
        <location evidence="1">Mitochondrion inner membrane</location>
    </subcellularLocation>
    <text evidence="1">Matrix and cytoplasmic side of the mitochondrial inner membrane.</text>
</comment>
<comment type="similarity">
    <text evidence="5">Belongs to the complex I 75 kDa subunit family.</text>
</comment>
<name>NDUS1_DICCI</name>
<protein>
    <recommendedName>
        <fullName>NADH-ubiquinone oxidoreductase 75 kDa subunit</fullName>
        <ecNumber>7.1.1.2</ecNumber>
    </recommendedName>
    <alternativeName>
        <fullName>Complex I-75kD</fullName>
        <shortName>CI-75kD</shortName>
    </alternativeName>
</protein>
<dbReference type="EC" id="7.1.1.2"/>
<dbReference type="EMBL" id="DQ336395">
    <property type="protein sequence ID" value="ABC60398.4"/>
    <property type="molecule type" value="Genomic_DNA"/>
</dbReference>
<dbReference type="SMR" id="Q2LCP5"/>
<dbReference type="GO" id="GO:0005743">
    <property type="term" value="C:mitochondrial inner membrane"/>
    <property type="evidence" value="ECO:0007669"/>
    <property type="project" value="UniProtKB-SubCell"/>
</dbReference>
<dbReference type="GO" id="GO:0051537">
    <property type="term" value="F:2 iron, 2 sulfur cluster binding"/>
    <property type="evidence" value="ECO:0007669"/>
    <property type="project" value="UniProtKB-KW"/>
</dbReference>
<dbReference type="GO" id="GO:0051539">
    <property type="term" value="F:4 iron, 4 sulfur cluster binding"/>
    <property type="evidence" value="ECO:0007669"/>
    <property type="project" value="UniProtKB-KW"/>
</dbReference>
<dbReference type="GO" id="GO:0046872">
    <property type="term" value="F:metal ion binding"/>
    <property type="evidence" value="ECO:0007669"/>
    <property type="project" value="UniProtKB-KW"/>
</dbReference>
<dbReference type="GO" id="GO:0008137">
    <property type="term" value="F:NADH dehydrogenase (ubiquinone) activity"/>
    <property type="evidence" value="ECO:0007669"/>
    <property type="project" value="UniProtKB-EC"/>
</dbReference>
<dbReference type="GO" id="GO:0042773">
    <property type="term" value="P:ATP synthesis coupled electron transport"/>
    <property type="evidence" value="ECO:0007669"/>
    <property type="project" value="InterPro"/>
</dbReference>
<dbReference type="CDD" id="cd00207">
    <property type="entry name" value="fer2"/>
    <property type="match status" value="1"/>
</dbReference>
<dbReference type="CDD" id="cd02774">
    <property type="entry name" value="MopB_Res-Cmplx1_Nad11-M"/>
    <property type="match status" value="1"/>
</dbReference>
<dbReference type="FunFam" id="3.10.20.740:FF:000004">
    <property type="entry name" value="NADH-quinone oxidoreductase"/>
    <property type="match status" value="1"/>
</dbReference>
<dbReference type="FunFam" id="3.30.70.20:FF:000002">
    <property type="entry name" value="NADH-ubiquinone oxidoreductase 75 kDa subunit"/>
    <property type="match status" value="1"/>
</dbReference>
<dbReference type="Gene3D" id="3.10.20.740">
    <property type="match status" value="1"/>
</dbReference>
<dbReference type="Gene3D" id="3.30.70.20">
    <property type="match status" value="1"/>
</dbReference>
<dbReference type="InterPro" id="IPR036010">
    <property type="entry name" value="2Fe-2S_ferredoxin-like_sf"/>
</dbReference>
<dbReference type="InterPro" id="IPR001041">
    <property type="entry name" value="2Fe-2S_ferredoxin-type"/>
</dbReference>
<dbReference type="InterPro" id="IPR006656">
    <property type="entry name" value="Mopterin_OxRdtase"/>
</dbReference>
<dbReference type="InterPro" id="IPR006963">
    <property type="entry name" value="Mopterin_OxRdtase_4Fe-4S_dom"/>
</dbReference>
<dbReference type="InterPro" id="IPR000283">
    <property type="entry name" value="NADH_UbQ_OxRdtase_75kDa_su_CS"/>
</dbReference>
<dbReference type="InterPro" id="IPR054351">
    <property type="entry name" value="NADH_UbQ_OxRdtase_ferredoxin"/>
</dbReference>
<dbReference type="InterPro" id="IPR010228">
    <property type="entry name" value="NADH_UbQ_OxRdtase_Gsu"/>
</dbReference>
<dbReference type="InterPro" id="IPR019574">
    <property type="entry name" value="NADH_UbQ_OxRdtase_Gsu_4Fe4S-bd"/>
</dbReference>
<dbReference type="InterPro" id="IPR050123">
    <property type="entry name" value="Prok_molybdopt-oxidoreductase"/>
</dbReference>
<dbReference type="NCBIfam" id="TIGR01973">
    <property type="entry name" value="NuoG"/>
    <property type="match status" value="1"/>
</dbReference>
<dbReference type="PANTHER" id="PTHR43105:SF13">
    <property type="entry name" value="NADH-UBIQUINONE OXIDOREDUCTASE 75 KDA SUBUNIT, MITOCHONDRIAL"/>
    <property type="match status" value="1"/>
</dbReference>
<dbReference type="PANTHER" id="PTHR43105">
    <property type="entry name" value="RESPIRATORY NITRATE REDUCTASE"/>
    <property type="match status" value="1"/>
</dbReference>
<dbReference type="Pfam" id="PF13510">
    <property type="entry name" value="Fer2_4"/>
    <property type="match status" value="1"/>
</dbReference>
<dbReference type="Pfam" id="PF22151">
    <property type="entry name" value="Fer4_NDSU1"/>
    <property type="match status" value="1"/>
</dbReference>
<dbReference type="Pfam" id="PF22117">
    <property type="entry name" value="Fer4_Nqo3"/>
    <property type="match status" value="1"/>
</dbReference>
<dbReference type="Pfam" id="PF00384">
    <property type="entry name" value="Molybdopterin"/>
    <property type="match status" value="1"/>
</dbReference>
<dbReference type="Pfam" id="PF10588">
    <property type="entry name" value="NADH-G_4Fe-4S_3"/>
    <property type="match status" value="1"/>
</dbReference>
<dbReference type="SMART" id="SM00929">
    <property type="entry name" value="NADH-G_4Fe-4S_3"/>
    <property type="match status" value="1"/>
</dbReference>
<dbReference type="SUPFAM" id="SSF54292">
    <property type="entry name" value="2Fe-2S ferredoxin-like"/>
    <property type="match status" value="1"/>
</dbReference>
<dbReference type="SUPFAM" id="SSF54862">
    <property type="entry name" value="4Fe-4S ferredoxins"/>
    <property type="match status" value="1"/>
</dbReference>
<dbReference type="SUPFAM" id="SSF53706">
    <property type="entry name" value="Formate dehydrogenase/DMSO reductase, domains 1-3"/>
    <property type="match status" value="1"/>
</dbReference>
<dbReference type="PROSITE" id="PS51085">
    <property type="entry name" value="2FE2S_FER_2"/>
    <property type="match status" value="1"/>
</dbReference>
<dbReference type="PROSITE" id="PS51839">
    <property type="entry name" value="4FE4S_HC3"/>
    <property type="match status" value="1"/>
</dbReference>
<dbReference type="PROSITE" id="PS51669">
    <property type="entry name" value="4FE4S_MOW_BIS_MGD"/>
    <property type="match status" value="1"/>
</dbReference>
<dbReference type="PROSITE" id="PS00641">
    <property type="entry name" value="COMPLEX1_75K_1"/>
    <property type="match status" value="1"/>
</dbReference>
<dbReference type="PROSITE" id="PS00642">
    <property type="entry name" value="COMPLEX1_75K_2"/>
    <property type="match status" value="1"/>
</dbReference>
<dbReference type="PROSITE" id="PS00643">
    <property type="entry name" value="COMPLEX1_75K_3"/>
    <property type="match status" value="1"/>
</dbReference>
<reference key="1">
    <citation type="submission" date="2008-05" db="EMBL/GenBank/DDBJ databases">
        <title>Evolutionary trends found in social amoebae.</title>
        <authorList>
            <person name="Gloeckner G."/>
            <person name="Schaap P."/>
            <person name="Winckler T."/>
        </authorList>
    </citation>
    <scope>NUCLEOTIDE SEQUENCE [GENOMIC DNA]</scope>
</reference>
<gene>
    <name type="primary">nad11</name>
    <name type="synonym">ndufs1</name>
</gene>
<accession>Q2LCP5</accession>